<reference key="1">
    <citation type="submission" date="2008-02" db="EMBL/GenBank/DDBJ databases">
        <title>Complete sequence of Yersinia pseudotuberculosis YPIII.</title>
        <authorList>
            <consortium name="US DOE Joint Genome Institute"/>
            <person name="Copeland A."/>
            <person name="Lucas S."/>
            <person name="Lapidus A."/>
            <person name="Glavina del Rio T."/>
            <person name="Dalin E."/>
            <person name="Tice H."/>
            <person name="Bruce D."/>
            <person name="Goodwin L."/>
            <person name="Pitluck S."/>
            <person name="Munk A.C."/>
            <person name="Brettin T."/>
            <person name="Detter J.C."/>
            <person name="Han C."/>
            <person name="Tapia R."/>
            <person name="Schmutz J."/>
            <person name="Larimer F."/>
            <person name="Land M."/>
            <person name="Hauser L."/>
            <person name="Challacombe J.F."/>
            <person name="Green L."/>
            <person name="Lindler L.E."/>
            <person name="Nikolich M.P."/>
            <person name="Richardson P."/>
        </authorList>
    </citation>
    <scope>NUCLEOTIDE SEQUENCE [LARGE SCALE GENOMIC DNA]</scope>
    <source>
        <strain>YPIII</strain>
    </source>
</reference>
<feature type="chain" id="PRO_1000127064" description="UPF0181 protein YPK_2448">
    <location>
        <begin position="1"/>
        <end position="85"/>
    </location>
</feature>
<feature type="region of interest" description="Disordered" evidence="2">
    <location>
        <begin position="50"/>
        <end position="85"/>
    </location>
</feature>
<feature type="compositionally biased region" description="Basic and acidic residues" evidence="2">
    <location>
        <begin position="55"/>
        <end position="72"/>
    </location>
</feature>
<feature type="compositionally biased region" description="Acidic residues" evidence="2">
    <location>
        <begin position="73"/>
        <end position="85"/>
    </location>
</feature>
<protein>
    <recommendedName>
        <fullName evidence="1">UPF0181 protein YPK_2448</fullName>
    </recommendedName>
</protein>
<comment type="similarity">
    <text evidence="1">Belongs to the UPF0181 family.</text>
</comment>
<sequence length="85" mass="9720">MLAGMPSLSHEEQQEAVERIHKFMSEGMSSGEAIALVAAEIRERHQNDPQAMAIFEDHDFDEHTESDYRRDDEPDADDIEDPYEG</sequence>
<gene>
    <name type="ordered locus">YPK_2448</name>
</gene>
<name>Y2448_YERPY</name>
<organism>
    <name type="scientific">Yersinia pseudotuberculosis serotype O:3 (strain YPIII)</name>
    <dbReference type="NCBI Taxonomy" id="502800"/>
    <lineage>
        <taxon>Bacteria</taxon>
        <taxon>Pseudomonadati</taxon>
        <taxon>Pseudomonadota</taxon>
        <taxon>Gammaproteobacteria</taxon>
        <taxon>Enterobacterales</taxon>
        <taxon>Yersiniaceae</taxon>
        <taxon>Yersinia</taxon>
    </lineage>
</organism>
<proteinExistence type="inferred from homology"/>
<accession>B1JP39</accession>
<evidence type="ECO:0000255" key="1">
    <source>
        <dbReference type="HAMAP-Rule" id="MF_00507"/>
    </source>
</evidence>
<evidence type="ECO:0000256" key="2">
    <source>
        <dbReference type="SAM" id="MobiDB-lite"/>
    </source>
</evidence>
<dbReference type="EMBL" id="CP000950">
    <property type="protein sequence ID" value="ACA68725.1"/>
    <property type="molecule type" value="Genomic_DNA"/>
</dbReference>
<dbReference type="RefSeq" id="WP_002211082.1">
    <property type="nucleotide sequence ID" value="NZ_CP009792.1"/>
</dbReference>
<dbReference type="SMR" id="B1JP39"/>
<dbReference type="KEGG" id="ypy:YPK_2448"/>
<dbReference type="PATRIC" id="fig|502800.11.peg.3136"/>
<dbReference type="HAMAP" id="MF_00507">
    <property type="entry name" value="UPF0181"/>
    <property type="match status" value="1"/>
</dbReference>
<dbReference type="InterPro" id="IPR005371">
    <property type="entry name" value="UPF0181"/>
</dbReference>
<dbReference type="NCBIfam" id="NF003476">
    <property type="entry name" value="PRK05114.1"/>
    <property type="match status" value="1"/>
</dbReference>
<dbReference type="Pfam" id="PF03701">
    <property type="entry name" value="UPF0181"/>
    <property type="match status" value="1"/>
</dbReference>